<feature type="chain" id="PRO_0000375421" description="Defensin-like turtle egg white protein TEWP">
    <location>
        <begin position="1"/>
        <end position="36"/>
    </location>
</feature>
<feature type="modified residue" description="Pyrrolidone carboxylic acid" evidence="1">
    <location>
        <position position="1"/>
    </location>
</feature>
<feature type="disulfide bond" evidence="1">
    <location>
        <begin position="4"/>
        <end position="30"/>
    </location>
</feature>
<feature type="disulfide bond" evidence="1">
    <location>
        <begin position="8"/>
        <end position="29"/>
    </location>
</feature>
<feature type="disulfide bond" evidence="1">
    <location>
        <begin position="12"/>
        <end position="24"/>
    </location>
</feature>
<feature type="non-terminal residue">
    <location>
        <position position="1"/>
    </location>
</feature>
<feature type="non-terminal residue">
    <location>
        <position position="36"/>
    </location>
</feature>
<feature type="strand" evidence="3">
    <location>
        <begin position="8"/>
        <end position="11"/>
    </location>
</feature>
<feature type="strand" evidence="3">
    <location>
        <begin position="21"/>
        <end position="24"/>
    </location>
</feature>
<feature type="strand" evidence="3">
    <location>
        <begin position="30"/>
        <end position="32"/>
    </location>
</feature>
<name>DBTEW_CARCR</name>
<reference key="1">
    <citation type="journal article" date="2006" name="Proteins">
        <title>Small cationic protein from a marine turtle has beta-defensin-like fold and antibacterial and antiviral activity.</title>
        <authorList>
            <person name="Chattopadhyay S."/>
            <person name="Sinha N.K."/>
            <person name="Banerjee S."/>
            <person name="Roy D."/>
            <person name="Chattopadhyay D."/>
            <person name="Roy S."/>
        </authorList>
    </citation>
    <scope>PROTEIN SEQUENCE OF 1-31</scope>
    <scope>STRUCTURE BY NMR OF 1-36</scope>
    <scope>DISULFIDE BONDS</scope>
    <scope>PYROGLUTAMATE FORMATION AT GLN-1</scope>
    <scope>FUNCTION</scope>
    <scope>SUBUNIT</scope>
    <scope>SUBCELLULAR LOCATION</scope>
    <scope>TISSUE SPECIFICITY</scope>
    <scope>MASS SPECTROMETRY</scope>
</reference>
<organism>
    <name type="scientific">Caretta caretta</name>
    <name type="common">Loggerhead sea turtle</name>
    <dbReference type="NCBI Taxonomy" id="8467"/>
    <lineage>
        <taxon>Eukaryota</taxon>
        <taxon>Metazoa</taxon>
        <taxon>Chordata</taxon>
        <taxon>Craniata</taxon>
        <taxon>Vertebrata</taxon>
        <taxon>Euteleostomi</taxon>
        <taxon>Archelosauria</taxon>
        <taxon>Testudinata</taxon>
        <taxon>Testudines</taxon>
        <taxon>Cryptodira</taxon>
        <taxon>Durocryptodira</taxon>
        <taxon>Americhelydia</taxon>
        <taxon>Chelonioidea</taxon>
        <taxon>Cheloniidae</taxon>
        <taxon>Caretta</taxon>
    </lineage>
</organism>
<dbReference type="PDB" id="2B5B">
    <property type="method" value="NMR"/>
    <property type="chains" value="A=2-36"/>
</dbReference>
<dbReference type="PDBsum" id="2B5B"/>
<dbReference type="SMR" id="P0CAP0"/>
<dbReference type="EvolutionaryTrace" id="P0CAP0"/>
<dbReference type="GO" id="GO:0005576">
    <property type="term" value="C:extracellular region"/>
    <property type="evidence" value="ECO:0007669"/>
    <property type="project" value="UniProtKB-SubCell"/>
</dbReference>
<dbReference type="GO" id="GO:0042742">
    <property type="term" value="P:defense response to bacterium"/>
    <property type="evidence" value="ECO:0007669"/>
    <property type="project" value="UniProtKB-KW"/>
</dbReference>
<sequence>QKKCPGRCTLKCGKHERPTLPYNCGKYICCVPVKVK</sequence>
<protein>
    <recommendedName>
        <fullName>Defensin-like turtle egg white protein TEWP</fullName>
        <shortName>TEWP</shortName>
    </recommendedName>
</protein>
<proteinExistence type="evidence at protein level"/>
<accession>P0CAP0</accession>
<comment type="function">
    <text evidence="1">Antibacterial and antiviral peptide. Has strong inhibitory activity towards E.coli and S.typhimurium. Has significant antiviral activity against Chandipura virus.</text>
</comment>
<comment type="subunit">
    <text evidence="1">Monomer.</text>
</comment>
<comment type="subcellular location">
    <subcellularLocation>
        <location evidence="1">Secreted</location>
    </subcellularLocation>
</comment>
<comment type="tissue specificity">
    <text evidence="1">Detected in egg white (at protein level).</text>
</comment>
<comment type="mass spectrometry">
    <text>All cysteines were modified with iodo-acetamide.</text>
</comment>
<comment type="similarity">
    <text evidence="2">Belongs to the beta-defensin family.</text>
</comment>
<evidence type="ECO:0000269" key="1">
    <source>
    </source>
</evidence>
<evidence type="ECO:0000305" key="2"/>
<evidence type="ECO:0007829" key="3">
    <source>
        <dbReference type="PDB" id="2B5B"/>
    </source>
</evidence>
<keyword id="KW-0002">3D-structure</keyword>
<keyword id="KW-0044">Antibiotic</keyword>
<keyword id="KW-0929">Antimicrobial</keyword>
<keyword id="KW-0211">Defensin</keyword>
<keyword id="KW-0903">Direct protein sequencing</keyword>
<keyword id="KW-1015">Disulfide bond</keyword>
<keyword id="KW-0873">Pyrrolidone carboxylic acid</keyword>
<keyword id="KW-0964">Secreted</keyword>